<accession>Q5HJR1</accession>
<feature type="initiator methionine" description="Removed" evidence="1">
    <location>
        <position position="1"/>
    </location>
</feature>
<feature type="chain" id="PRO_0000305320" description="HTH-type transcriptional regulator NorG">
    <location>
        <begin position="2"/>
        <end position="442"/>
    </location>
</feature>
<feature type="domain" description="HTH gntR-type" evidence="2">
    <location>
        <begin position="2"/>
        <end position="46"/>
    </location>
</feature>
<feature type="DNA-binding region" description="H-T-H motif" evidence="2">
    <location>
        <begin position="6"/>
        <end position="25"/>
    </location>
</feature>
<feature type="modified residue" description="N6-(pyridoxal phosphate)lysine" evidence="1">
    <location>
        <position position="288"/>
    </location>
</feature>
<evidence type="ECO:0000250" key="1"/>
<evidence type="ECO:0000255" key="2">
    <source>
        <dbReference type="PROSITE-ProRule" id="PRU00307"/>
    </source>
</evidence>
<evidence type="ECO:0000305" key="3"/>
<reference key="1">
    <citation type="journal article" date="2005" name="J. Bacteriol.">
        <title>Insights on evolution of virulence and resistance from the complete genome analysis of an early methicillin-resistant Staphylococcus aureus strain and a biofilm-producing methicillin-resistant Staphylococcus epidermidis strain.</title>
        <authorList>
            <person name="Gill S.R."/>
            <person name="Fouts D.E."/>
            <person name="Archer G.L."/>
            <person name="Mongodin E.F."/>
            <person name="DeBoy R.T."/>
            <person name="Ravel J."/>
            <person name="Paulsen I.T."/>
            <person name="Kolonay J.F."/>
            <person name="Brinkac L.M."/>
            <person name="Beanan M.J."/>
            <person name="Dodson R.J."/>
            <person name="Daugherty S.C."/>
            <person name="Madupu R."/>
            <person name="Angiuoli S.V."/>
            <person name="Durkin A.S."/>
            <person name="Haft D.H."/>
            <person name="Vamathevan J.J."/>
            <person name="Khouri H."/>
            <person name="Utterback T.R."/>
            <person name="Lee C."/>
            <person name="Dimitrov G."/>
            <person name="Jiang L."/>
            <person name="Qin H."/>
            <person name="Weidman J."/>
            <person name="Tran K."/>
            <person name="Kang K.H."/>
            <person name="Hance I.R."/>
            <person name="Nelson K.E."/>
            <person name="Fraser C.M."/>
        </authorList>
    </citation>
    <scope>NUCLEOTIDE SEQUENCE [LARGE SCALE GENOMIC DNA]</scope>
    <source>
        <strain>COL</strain>
    </source>
</reference>
<keyword id="KW-0010">Activator</keyword>
<keyword id="KW-0032">Aminotransferase</keyword>
<keyword id="KW-0238">DNA-binding</keyword>
<keyword id="KW-0663">Pyridoxal phosphate</keyword>
<keyword id="KW-0678">Repressor</keyword>
<keyword id="KW-0804">Transcription</keyword>
<keyword id="KW-0805">Transcription regulation</keyword>
<keyword id="KW-0808">Transferase</keyword>
<proteinExistence type="inferred from homology"/>
<gene>
    <name type="primary">norG</name>
    <name type="ordered locus">SACOL0091</name>
</gene>
<name>NORG_STAAC</name>
<sequence length="442" mass="51303">MKIPSHRQLAIQYNVNRVTIIKSIELLEAEGFIYTKVGSGTYVNDYLNEAHITNKWSEMMLWSSQQRSQYTVQLINKIETDDSYIHISKGELGISLMPHIQLKKAMSNTASHIEDLSFGYNNGYGYIKLRDIIVERMSKQGINVGRENVMITSGALHAIQLLSIGFLGQDAIIISNTPSYIHSTNVFEQLNFRHIDVPYNQINEIDTIIDRFINFKNKAIYIEPRFNNPTGRSLTNEQKKNIITYSERHNIPIIEDDIFRDIFFSDPTPSIKTYDKLGKVIHISSFSKTIAPAIRIGWIVASEKIIEQLADVRMQIDYGSSILSQMVVYEMLKNKSYDKHLVKLRYVLKDKRDFMLNILNNLFKDIAHWEVPSGGYFVWLVFKIDIDIKYLFYELLSKEKILINPGYIYGSKEKSIRLSFAFESNENIKHALYKIYTYVKKV</sequence>
<dbReference type="EMBL" id="CP000046">
    <property type="protein sequence ID" value="AAW38735.1"/>
    <property type="status" value="ALT_INIT"/>
    <property type="molecule type" value="Genomic_DNA"/>
</dbReference>
<dbReference type="SMR" id="Q5HJR1"/>
<dbReference type="KEGG" id="sac:SACOL0091"/>
<dbReference type="HOGENOM" id="CLU_017584_0_0_9"/>
<dbReference type="Proteomes" id="UP000000530">
    <property type="component" value="Chromosome"/>
</dbReference>
<dbReference type="GO" id="GO:0003677">
    <property type="term" value="F:DNA binding"/>
    <property type="evidence" value="ECO:0007669"/>
    <property type="project" value="UniProtKB-KW"/>
</dbReference>
<dbReference type="GO" id="GO:0003700">
    <property type="term" value="F:DNA-binding transcription factor activity"/>
    <property type="evidence" value="ECO:0007669"/>
    <property type="project" value="InterPro"/>
</dbReference>
<dbReference type="GO" id="GO:0030170">
    <property type="term" value="F:pyridoxal phosphate binding"/>
    <property type="evidence" value="ECO:0007669"/>
    <property type="project" value="InterPro"/>
</dbReference>
<dbReference type="GO" id="GO:0008483">
    <property type="term" value="F:transaminase activity"/>
    <property type="evidence" value="ECO:0007669"/>
    <property type="project" value="UniProtKB-KW"/>
</dbReference>
<dbReference type="GO" id="GO:1901605">
    <property type="term" value="P:alpha-amino acid metabolic process"/>
    <property type="evidence" value="ECO:0007669"/>
    <property type="project" value="TreeGrafter"/>
</dbReference>
<dbReference type="GO" id="GO:0009058">
    <property type="term" value="P:biosynthetic process"/>
    <property type="evidence" value="ECO:0007669"/>
    <property type="project" value="InterPro"/>
</dbReference>
<dbReference type="CDD" id="cd00609">
    <property type="entry name" value="AAT_like"/>
    <property type="match status" value="1"/>
</dbReference>
<dbReference type="CDD" id="cd07377">
    <property type="entry name" value="WHTH_GntR"/>
    <property type="match status" value="1"/>
</dbReference>
<dbReference type="FunFam" id="3.40.640.10:FF:000023">
    <property type="entry name" value="Transcriptional regulator, GntR family"/>
    <property type="match status" value="1"/>
</dbReference>
<dbReference type="Gene3D" id="3.90.1150.10">
    <property type="entry name" value="Aspartate Aminotransferase, domain 1"/>
    <property type="match status" value="1"/>
</dbReference>
<dbReference type="Gene3D" id="3.40.640.10">
    <property type="entry name" value="Type I PLP-dependent aspartate aminotransferase-like (Major domain)"/>
    <property type="match status" value="1"/>
</dbReference>
<dbReference type="Gene3D" id="1.10.10.10">
    <property type="entry name" value="Winged helix-like DNA-binding domain superfamily/Winged helix DNA-binding domain"/>
    <property type="match status" value="1"/>
</dbReference>
<dbReference type="InterPro" id="IPR004839">
    <property type="entry name" value="Aminotransferase_I/II_large"/>
</dbReference>
<dbReference type="InterPro" id="IPR050859">
    <property type="entry name" value="Class-I_PLP-dep_aminotransf"/>
</dbReference>
<dbReference type="InterPro" id="IPR015424">
    <property type="entry name" value="PyrdxlP-dep_Trfase"/>
</dbReference>
<dbReference type="InterPro" id="IPR015421">
    <property type="entry name" value="PyrdxlP-dep_Trfase_major"/>
</dbReference>
<dbReference type="InterPro" id="IPR015422">
    <property type="entry name" value="PyrdxlP-dep_Trfase_small"/>
</dbReference>
<dbReference type="InterPro" id="IPR000524">
    <property type="entry name" value="Tscrpt_reg_HTH_GntR"/>
</dbReference>
<dbReference type="InterPro" id="IPR036388">
    <property type="entry name" value="WH-like_DNA-bd_sf"/>
</dbReference>
<dbReference type="InterPro" id="IPR036390">
    <property type="entry name" value="WH_DNA-bd_sf"/>
</dbReference>
<dbReference type="PANTHER" id="PTHR42790">
    <property type="entry name" value="AMINOTRANSFERASE"/>
    <property type="match status" value="1"/>
</dbReference>
<dbReference type="PANTHER" id="PTHR42790:SF19">
    <property type="entry name" value="KYNURENINE_ALPHA-AMINOADIPATE AMINOTRANSFERASE, MITOCHONDRIAL"/>
    <property type="match status" value="1"/>
</dbReference>
<dbReference type="Pfam" id="PF00155">
    <property type="entry name" value="Aminotran_1_2"/>
    <property type="match status" value="1"/>
</dbReference>
<dbReference type="Pfam" id="PF00392">
    <property type="entry name" value="GntR"/>
    <property type="match status" value="1"/>
</dbReference>
<dbReference type="PRINTS" id="PR00035">
    <property type="entry name" value="HTHGNTR"/>
</dbReference>
<dbReference type="SMART" id="SM00345">
    <property type="entry name" value="HTH_GNTR"/>
    <property type="match status" value="1"/>
</dbReference>
<dbReference type="SUPFAM" id="SSF53383">
    <property type="entry name" value="PLP-dependent transferases"/>
    <property type="match status" value="1"/>
</dbReference>
<dbReference type="SUPFAM" id="SSF46785">
    <property type="entry name" value="Winged helix' DNA-binding domain"/>
    <property type="match status" value="1"/>
</dbReference>
<dbReference type="PROSITE" id="PS50949">
    <property type="entry name" value="HTH_GNTR"/>
    <property type="match status" value="1"/>
</dbReference>
<organism>
    <name type="scientific">Staphylococcus aureus (strain COL)</name>
    <dbReference type="NCBI Taxonomy" id="93062"/>
    <lineage>
        <taxon>Bacteria</taxon>
        <taxon>Bacillati</taxon>
        <taxon>Bacillota</taxon>
        <taxon>Bacilli</taxon>
        <taxon>Bacillales</taxon>
        <taxon>Staphylococcaceae</taxon>
        <taxon>Staphylococcus</taxon>
    </lineage>
</organism>
<comment type="function">
    <text evidence="1">Positively regulates the expression of the NorB efflux pump and negatively regulates the expression of the AbcA efflux pump. Binds specifically to the promoters of norA, norB and norC and abcA genes. Could also have an aminotransferase activity (By similarity).</text>
</comment>
<comment type="cofactor">
    <cofactor evidence="3">
        <name>pyridoxal 5'-phosphate</name>
        <dbReference type="ChEBI" id="CHEBI:597326"/>
    </cofactor>
</comment>
<comment type="similarity">
    <text evidence="3">In the C-terminal section; belongs to the class-I pyridoxal-phosphate-dependent aminotransferase family.</text>
</comment>
<comment type="sequence caution" evidence="3">
    <conflict type="erroneous initiation">
        <sequence resource="EMBL-CDS" id="AAW38735"/>
    </conflict>
</comment>
<protein>
    <recommendedName>
        <fullName>HTH-type transcriptional regulator NorG</fullName>
    </recommendedName>
</protein>